<organism>
    <name type="scientific">Potato virus Y (strain N)</name>
    <name type="common">PVY</name>
    <dbReference type="NCBI Taxonomy" id="12219"/>
    <lineage>
        <taxon>Viruses</taxon>
        <taxon>Riboviria</taxon>
        <taxon>Orthornavirae</taxon>
        <taxon>Pisuviricota</taxon>
        <taxon>Stelpaviricetes</taxon>
        <taxon>Patatavirales</taxon>
        <taxon>Potyviridae</taxon>
        <taxon>Potyvirus</taxon>
        <taxon>Potyvirus yituberosi</taxon>
        <taxon>Potato virus Y</taxon>
    </lineage>
</organism>
<comment type="function">
    <molecule>Helper component proteinase</molecule>
    <text evidence="2">Required for aphid transmission and also has proteolytic activity. Only cleaves a Gly-Gly dipeptide at its own C-terminus. Interacts with virions and aphid stylets. Acts as a suppressor of RNA-mediated gene silencing, also known as post-transcriptional gene silencing (PTGS), a mechanism of plant viral defense that limits the accumulation of viral RNAs. May have RNA-binding activity.</text>
</comment>
<comment type="function">
    <molecule>Cytoplasmic inclusion protein</molecule>
    <text>Has helicase activity. It may be involved in replication.</text>
</comment>
<comment type="function">
    <molecule>6 kDa protein 1</molecule>
    <text evidence="4 7">Indispensable for virus replication (By similarity). Reduces the abundance of host transcripts related to jasmonic acid biosynthesis therefore altering the host defenses (By similarity). In order to increase its own stability, decreases host protein degradation pathways (By similarity).</text>
</comment>
<comment type="function">
    <molecule>6 kDa protein 2</molecule>
    <text evidence="3">Indispensable for virus replication.</text>
</comment>
<comment type="function">
    <molecule>Viral genome-linked protein</molecule>
    <text evidence="19">Mediates the cap-independent, EIF4E-dependent translation of viral genomic RNAs (PubMed:31712417). Binds to the cap-binding site of host EIF4E and thus interferes with the host EIF4E-dependent mRNA export and translation (PubMed:31712417). VPg-RNA directly binds EIF4E and is a template for transcription (PubMed:31712417). Also forms trimeric complexes with EIF4E-EIF4G, which are templates for translation (PubMed:31712417).</text>
</comment>
<comment type="function">
    <molecule>Nuclear inclusion protein A</molecule>
    <text evidence="2">Has RNA-binding and proteolytic activities.</text>
</comment>
<comment type="function">
    <molecule>Nuclear inclusion protein B</molecule>
    <text>An RNA-dependent RNA polymerase that plays an essential role in the virus replication.</text>
</comment>
<comment type="function">
    <molecule>Capsid protein</molecule>
    <text evidence="2">Involved in aphid transmission, cell-to-cell and systemis movement, encapsidation of the viral RNA and in the regulation of viral RNA amplification.</text>
</comment>
<comment type="catalytic activity">
    <molecule>Nuclear inclusion protein B</molecule>
    <reaction evidence="9">
        <text>RNA(n) + a ribonucleoside 5'-triphosphate = RNA(n+1) + diphosphate</text>
        <dbReference type="Rhea" id="RHEA:21248"/>
        <dbReference type="Rhea" id="RHEA-COMP:14527"/>
        <dbReference type="Rhea" id="RHEA-COMP:17342"/>
        <dbReference type="ChEBI" id="CHEBI:33019"/>
        <dbReference type="ChEBI" id="CHEBI:61557"/>
        <dbReference type="ChEBI" id="CHEBI:140395"/>
        <dbReference type="EC" id="2.7.7.48"/>
    </reaction>
</comment>
<comment type="catalytic activity">
    <molecule>Nuclear inclusion protein A</molecule>
    <reaction evidence="2">
        <text>Hydrolyzes glutaminyl bonds, and activity is further restricted by preferences for the amino acids in P6 - P1' that vary with the species of potyvirus, e.g. Glu-Xaa-Xaa-Tyr-Xaa-Gln-|-(Ser or Gly) for the enzyme from tobacco etch virus. The natural substrate is the viral polyprotein, but other proteins and oligopeptides containing the appropriate consensus sequence are also cleaved.</text>
        <dbReference type="EC" id="3.4.22.44"/>
    </reaction>
</comment>
<comment type="catalytic activity">
    <molecule>Helper component proteinase</molecule>
    <reaction evidence="2">
        <text>Hydrolyzes a Gly-|-Gly bond at its own C-terminus, commonly in the sequence -Tyr-Xaa-Val-Gly-|-Gly, in the processing of the potyviral polyprotein.</text>
        <dbReference type="EC" id="3.4.22.45"/>
    </reaction>
</comment>
<comment type="subunit">
    <molecule>Viral genome-linked protein</molecule>
    <text evidence="16 17 19">Interacts with host eIF4E protein (via cap-binding region); this interaction mediates the translation of the VPg-viral RNA conjugates (PubMed:31712417). Part of a complex that comprises VPg, RNA, host EIF4E and EIF4G; this interaction mediates the translation of the VPg-viral RNA conjugates (PubMed:31712417). Interaction is possible in susceptible hosts but impaired in resistant plants: the VPg of strain LYE84 interacts with tomato eIF4E1 and eIF4E2 as well as with the Capsicum annuum eIF4E1 susceptible allele pvr2(+) but not with resistant alleles pvr2(1), pvr2(2), pvr2(3), pvr2(4), pvr2(5), pvr2(6), pvr2(7), pvr2(8) and pvr2(9), the VPg of strain SON41 interacts with C.annuum eIF4E1 susceptible alleles pvr2(+), pvr2(1), pvr2(2), pvr2(3) and pvr2(4) but not with resistant alleles pvr2(5), pvr2(6), pvr2(7), pvr2(8) and pvr2(9), the VPg of strain LYE90 interacts only with tomato eIF4E1 (PubMed:18182024, PubMed:22242134).</text>
</comment>
<comment type="subcellular location">
    <molecule>6 kDa protein 1</molecule>
    <subcellularLocation>
        <location>Host cytoplasmic vesicle</location>
    </subcellularLocation>
    <text evidence="4">Probably colocalizes with 6K2-induced vesicles associated with host chloroplasts.</text>
</comment>
<comment type="subcellular location">
    <molecule>6 kDa protein 2</molecule>
    <subcellularLocation>
        <location evidence="3">Host cytoplasmic vesicle</location>
    </subcellularLocation>
    <text evidence="3">6K-induced vesicles associate with host chloroplasts.</text>
</comment>
<comment type="subcellular location">
    <molecule>Viral genome-linked protein</molecule>
    <subcellularLocation>
        <location evidence="6">Host nucleus</location>
    </subcellularLocation>
    <text evidence="6">Binds to host plant eIF4E proteins in the host nucleus.</text>
</comment>
<comment type="subcellular location">
    <molecule>Capsid protein</molecule>
    <subcellularLocation>
        <location evidence="20">Virion</location>
    </subcellularLocation>
</comment>
<comment type="alternative products">
    <event type="ribosomal frameshifting"/>
    <isoform>
        <id>P18247-1</id>
        <name>Genome polyprotein</name>
        <sequence type="displayed"/>
    </isoform>
    <isoform>
        <id>P0CJ93-1</id>
        <name>P3N-PIPO polyprotein</name>
        <sequence type="external"/>
    </isoform>
</comment>
<comment type="domain">
    <molecule>Helper component proteinase</molecule>
    <text>The N-terminus is involved in interaction with stylets. The central part is involved in interaction with virions and the C-terminus is involved in cell-to cell movement of the virus.</text>
</comment>
<comment type="PTM">
    <molecule>Viral genome-linked protein</molecule>
    <text evidence="3">VPg is uridylylated by the polymerase and is covalently attached to the 5'-end of the genomic RNA. This uridylylated form acts as a nucleotide-peptide primer for the polymerase (By similarity).</text>
</comment>
<comment type="PTM">
    <molecule>Genome polyprotein</molecule>
    <text evidence="1">Potyviral RNA is expressed as two polyproteins which undergo post-translational proteolytic processing. Genome polyprotein is processed by NIa-pro, P1 and HC-pro proteinases resulting in the production of at least ten individual proteins. P3N-PIPO polyprotein is cleaved by P1 and HC-pro proteinases resulting in the production of three individual proteins. The P1 proteinase and the HC-pro cleave only their respective C-termini autocatalytically. 6K1 is essential for proper proteolytic separation of P3 from CI (By similarity).</text>
</comment>
<comment type="polymorphism">
    <molecule>Viral genome-linked protein</molecule>
    <text evidence="16">Variant of the resistance-breaking strain SON41 has the ability to contaminate Capsicum annuum plants containing resistant alleles pvr2(+), pvr2(1), pvr2(2), pvr2(3) and pvr2(4) but not plants containing alleles pvr2(5), pvr2(6), pvr2(7), pvr2(8) and pvr2(9).</text>
</comment>
<comment type="polymorphism">
    <molecule>Viral genome-linked protein</molecule>
    <text evidence="16">Variant of the resistance-breaking strain LYE84 has the ability to contaminate Capsicum annuum plants containing the resistant allele pvr2(+) but not plants containing alleles pvr2(1), pvr2(2), pvr2(3), pvr2(4), pvr2(5), pvr2(6), pvr2(7), pvr2(8) and pvr2(9).</text>
</comment>
<comment type="polymorphism">
    <molecule>Viral genome-linked protein</molecule>
    <text evidence="18">Variant of the resistance-breaking strain SON41g has the ability to contaminate Solanum pimpinellifolium cv. LA0411 plants containing the resistant allele eIF4E1-pot1(2).</text>
</comment>
<comment type="miscellaneous">
    <molecule>Isoform Genome polyprotein</molecule>
    <text>Produced by conventional translation.</text>
</comment>
<comment type="miscellaneous">
    <text evidence="19">VPg is not an intrinsically disordered protein.</text>
</comment>
<comment type="similarity">
    <text evidence="20">Belongs to the potyviridae genome polyprotein family.</text>
</comment>
<reference key="1">
    <citation type="journal article" date="1989" name="J. Gen. Virol.">
        <title>Nucleotide sequence of potato virus Y (N Strain) genomic RNA.</title>
        <authorList>
            <person name="Robaglia C."/>
            <person name="Durand-Tardif M."/>
            <person name="Tronchet M."/>
            <person name="Boudazin G."/>
            <person name="Astier-Manifacier S."/>
            <person name="Casse-Delbart F."/>
        </authorList>
    </citation>
    <scope>NUCLEOTIDE SEQUENCE [GENOMIC RNA]</scope>
</reference>
<reference key="2">
    <citation type="submission" date="1994-01" db="EMBL/GenBank/DDBJ databases">
        <authorList>
            <person name="Durand-Tardif M."/>
        </authorList>
    </citation>
    <scope>SEQUENCE REVISION</scope>
</reference>
<reference key="3">
    <citation type="journal article" date="1999" name="Proc. Natl. Acad. Sci. U.S.A.">
        <title>Suppression of gene silencing: a general strategy used by diverse DNA and RNA viruses of plants.</title>
        <authorList>
            <person name="Voinnet O."/>
            <person name="Pinto Y.M."/>
            <person name="Baulcombe D.C."/>
        </authorList>
    </citation>
    <scope>FUNCTION (HELPER COMPONENT PROTEINASE)</scope>
</reference>
<reference key="4">
    <citation type="journal article" date="2001" name="Virus Res.">
        <title>Potyvirus proteins: a wealth of functions.</title>
        <authorList>
            <person name="Urcuqui-Inchima S."/>
            <person name="Haenni A.L."/>
            <person name="Bernardi F."/>
        </authorList>
    </citation>
    <scope>REVIEW</scope>
</reference>
<reference key="5">
    <citation type="journal article" date="2008" name="Plant J.">
        <title>Natural variation and functional analyses provide evidence for co-evolution between plant eIF4E and potyviral VPg.</title>
        <authorList>
            <person name="Charron C."/>
            <person name="Nicolai M."/>
            <person name="Gallois J.-L."/>
            <person name="Robaglia C."/>
            <person name="Moury B."/>
            <person name="Palloix A."/>
            <person name="Caranta C."/>
        </authorList>
    </citation>
    <scope>FUNCTION (VIRAL GENOME-LINKED PROTEIN)</scope>
    <scope>INTERACTION WITH HOST CAPSICUM ANNUUM EIF4E1 (VIRAL GENOME-LINKED PROTEIN)</scope>
    <source>
        <strain>LYE84</strain>
        <strain>SON41</strain>
    </source>
</reference>
<reference key="6">
    <citation type="journal article" date="2011" name="PLoS ONE">
        <title>Knock-down of both eIF4E1 and eIF4E2 genes confers broad-spectrum resistance against potyviruses in tomato.</title>
        <authorList>
            <person name="Mazier M."/>
            <person name="Flamain F."/>
            <person name="Nicolai M."/>
            <person name="Sarnette V."/>
            <person name="Caranta C."/>
        </authorList>
    </citation>
    <scope>INTERACTION WITH HOST TOMATO EIF4E1 AND EIF4E2 (VIRAL GENOME-LINKED PROTEIN)</scope>
    <source>
        <strain>LYE84</strain>
        <strain>LYE90</strain>
    </source>
</reference>
<reference key="7">
    <citation type="journal article" date="2016" name="J. Gen. Virol.">
        <title>A new eIF4E1 allele characterized by RNAseq data mining is associated with resistance to potato virus Y in tomato albeit with a low durability.</title>
        <authorList>
            <person name="Lebaron C."/>
            <person name="Rosado A."/>
            <person name="Sauvage C."/>
            <person name="Gauffier C."/>
            <person name="German-Retana S."/>
            <person name="Moury B."/>
            <person name="Gallois J.-L."/>
        </authorList>
    </citation>
    <scope>FUNCTION (VIRAL GENOME-LINKED PROTEIN)</scope>
    <scope>VARIANTS SER-1958 AND VAL-1982</scope>
    <source>
        <strain>LYE90</strain>
        <strain>N605</strain>
        <strain>SON41</strain>
    </source>
</reference>
<reference key="8">
    <citation type="journal article" date="2017" name="Genet. Mol. Biol.">
        <title>Translational control in plant antiviral immunity.</title>
        <authorList>
            <person name="Machado J.P.B."/>
            <person name="Calil I.P."/>
            <person name="Santos A.A."/>
            <person name="Fontes E.P.B."/>
        </authorList>
    </citation>
    <scope>REVIEW</scope>
</reference>
<reference evidence="23" key="9">
    <citation type="journal article" date="2019" name="Proc. Natl. Acad. Sci. U.S.A.">
        <title>Structural studies of the eIF4E-VPg complex reveal a direct competition for capped RNA: Implications for translation.</title>
        <authorList>
            <person name="Coutinho de Oliveira L."/>
            <person name="Volpon L."/>
            <person name="Rahardjo A.K."/>
            <person name="Osborne M.J."/>
            <person name="Culjkovic-Kraljacic B."/>
            <person name="Trahan C."/>
            <person name="Oeffinger M."/>
            <person name="Kwok B.H."/>
            <person name="Borden K.L.B."/>
        </authorList>
    </citation>
    <scope>STRUCTURE BY NMR OF 47-230</scope>
    <scope>FUNCTION (VIRAL GENOME-LINKED PROTEIN)</scope>
    <scope>INTERACTION WITH HOST EIF4E (VIRAL GENOME-LINKED PROTEIN)</scope>
    <scope>MUTAGENESIS OF ASP-1954; GLU-1957; MET-1958 AND GLN-1959</scope>
    <scope>IDENTIFICATION IN A COMPLEX WITH RNA; HOST EIF4E AND EIF4G (VIRAL GENOME-LINKED PROTEIN)</scope>
</reference>
<reference key="10">
    <citation type="journal article" date="2021" name="PLoS ONE">
        <title>Analysis of proteolytic processing sites in potyvirus polyproteins revealed differential amino acid preferences of NIa-Pro protease in each of seven cleavage sites.</title>
        <authorList>
            <person name="Goh C.J."/>
            <person name="Hahn Y."/>
        </authorList>
    </citation>
    <scope>PROTEOLYTIC CLEAVAGE (GENOME POLYPROTEIN)</scope>
</reference>
<name>POLG_PVYN</name>
<keyword id="KW-0002">3D-structure</keyword>
<keyword id="KW-0067">ATP-binding</keyword>
<keyword id="KW-0167">Capsid protein</keyword>
<keyword id="KW-0191">Covalent protein-RNA linkage</keyword>
<keyword id="KW-1139">Helical capsid protein</keyword>
<keyword id="KW-0347">Helicase</keyword>
<keyword id="KW-1036">Host cytoplasmic vesicle</keyword>
<keyword id="KW-1048">Host nucleus</keyword>
<keyword id="KW-0945">Host-virus interaction</keyword>
<keyword id="KW-0378">Hydrolase</keyword>
<keyword id="KW-1090">Inhibition of host innate immune response by virus</keyword>
<keyword id="KW-0547">Nucleotide-binding</keyword>
<keyword id="KW-0548">Nucleotidyltransferase</keyword>
<keyword id="KW-0597">Phosphoprotein</keyword>
<keyword id="KW-0645">Protease</keyword>
<keyword id="KW-1185">Reference proteome</keyword>
<keyword id="KW-0688">Ribosomal frameshifting</keyword>
<keyword id="KW-0696">RNA-directed RNA polymerase</keyword>
<keyword id="KW-0720">Serine protease</keyword>
<keyword id="KW-0941">Suppressor of RNA silencing</keyword>
<keyword id="KW-0788">Thiol protease</keyword>
<keyword id="KW-0808">Transferase</keyword>
<keyword id="KW-0899">Viral immunoevasion</keyword>
<keyword id="KW-0693">Viral RNA replication</keyword>
<keyword id="KW-0946">Virion</keyword>
<accession>P18247</accession>
<accession>Q85266</accession>
<accession>Q85267</accession>
<accession>Q85268</accession>
<accession>Q85269</accession>
<accession>Q85270</accession>
<accession>Q85271</accession>
<accession>Q85272</accession>
<accession>Q85273</accession>
<sequence>MATYMSTICFGSFECKLPYSPASCEHIVKEREVPASVDPFADLETQLSARLLKQKYATVRVLKNGTFTYRYKTDAQIMRIQKKLERKDREEYHFQMAAPSIVSKITIAGGDPPSKSEPQAPRGIIHTTPRMRKVKTRPIIKLTEGQMNHLIKQIKQIMSEKRGSVHLISKKTTHVQYKKILGAYSAAVRTAHMMGLRRRVDFRCDMWTVGLLQRLARTDKWSNQVRTINIRRGDSGVILNTKSLKGHFGRSSGGLFIVRGSHEGKLYDARSRVTQSILNSMIQFSNADNFWKGLDGNWARMRYPSDHTCVAGLPVEDCGRVAALMAHSILPCYKITCPTCAQQYASLPVSDLFKLLHKHARDGLNRLGADKDRFIHVNKFLIALEHLTEPVDLNLELFNEIFKSIGEKQQAPFKNLNVLNNFFLKGKENTAHEWQVAQLSLLELARFQKNRTDNIKKGDISFFRNKLSAKANWNLYLSCDNQLDKNANFLWGQREYHAKRFFSNFFEEIDPAKGYSAYEIRKHPSGTRKLSIGNLVVPLDLAEFRQKMKGDYRKQPGVSKKCTSSKDGNYVYPCCCTTLDDGSAIESTFYPPTKKHLVIGNSGDQKFVDLPKGDSEMLYIAKQGYCYINVFLAMLINISEEDAKDFTKKVRDMCVPKLGTWPTMMDLATTCAQMRIFYPDVHDAELPRILVDHDTQTCHVVDSFGSQTTGYHILKASSVSQLILFANDELESDIKHYRVGGVPNASPELGSTISPFREGGVIMSESAALKLLLKGIFRPKVMRQLLLDEPYLLILSILSPGILMAMYNNGIFELAVRLWINEKQSIAMIASLLSALALRVSAAETLVAQRIIIDAAATDLLDATCDGFNLHLTYPTALMVLQVVKNRNECDDTLFKAGFPSYNTSVVQIMEKNYLNLLNDAWKDLTWRENYPQHGTHTEQNALSTRYIKPTEKADLKGLYNISPQAFLGRSAQVVKGTASGLSERFNNYFNTKCVNISSFFIRRIFRRLPTFVTFVNSLLVISMLTSVVAVCQAIILDQRKYRREIELMQIEKNEIVCMELYASLQRKLERDFTWDEYIEYLKSVNPQIVQFAQAQMEEYDVRHQRSTPVVKNLEQVVAFMALVIMVFDAERSDCVFKTLNKFKGVLSSLDYEVRHQSLDDVIKNFDERNEIIDFELSEDTIRTSSVLDTKFSDWWDRQIQMGHTLPHYRTEGHFMEFTRATAVQVANDIAHSEHLDFLVRGAVGSGKSTGLPVHLSVAGSVLLIEPTRPLAENVFKQLSSEPFFKKPTLRMRGNSIFGSSPISVMTSGFALHYFANNRSQLAQFNFVIFDECHVLDPSAMAFRSLLSVYHQACKVLKVSATPVGREVEFTTQQPVKLIVEDTVSFQSFVDAQGSKTNADVVQFGSNVLVYVSSYNEVDTLAKLLTDKNMMVTKVDGRTMKHGCLEIVTKGTSARPHFVVATNIIENGVTLDIDVVVDFGLKVSPFLDIDNRSIAYNKVSVSYGERIQRLGRVGRFKKGVALRIGHTEKGIIEIPSMVATEAALACFAYNLPVMTGGVSTSLIGNCTVRQVKTMQQFELSPFFIQNFVAHDGSMHPVIHDILKKYKLRDCMTPLCDQSIPYRASSTWLSVSEYERLGVALEIPKQVKIAFHIKEIPPKLHEMLWETVVKYKDVCLFPSIRASSISKIAYTLRTDLFAIPRTLILVERLLEEERVKQSQFRSLIDEGCSSMFSIVNLTNTLRARYAKDYTAENIQKLEKVRSQLKEFSNLDGSACEENLIKRYESLQFVHHQAATSLAKDLKLKGIWNKSLVAKDLIIAGAVAIGGIGLIYSWFTQSVETVSHQGKNKSKRIQALKFRHARDKRAGFEIDNNDDTIEEFFGSAYRKKGKGKGTTVGMGKSSRRFINMYGFDPTEYSFIQFVDPLTGRQIEENVYADIRDIQERFSEVRKKMVENDDIEMQALGSNTTIHAYFRKDWCDKALKIDLMPHNPLKVCDKTNGIAKFPERELELRQTGPAVEVDVKDIPAQEVEHEAKSLMRGLRDFNPIAQTVCRLKVSVEYGASEMYGFGFGAYIVANHHLFRSYNGSMEVQSMHGTFRVKNLHSLSVLPIKGRDIILIKMPKDFPVFPQKLHFRAPTQNERICLVGTNFQEKYASSIITETSTTYNIPGSTFWKHWIETDNGHCGLPVVSTADGCIVGIHSLANNAHTTNYYSAFDEDFESKYLRTNEHNEWVKSWVYNPDTVLWGPLKLKDSTPKGLFKTTKLVQDLIDHDVVVEQAKHSAWMFEALTGNLQAVATMKSQLVTKHVVKGECRHFTEFLTVDAEAEAEAFFRPLMDAYGKSLLNRDAYIKDIMKYSKPIDVGVVDRMHLRKPSIGLSSTCNVHGFKKCAYVTDEQEIFKALNMKAAVGASYGCKKKDYFEHFTDADKEEIVMQSCLRLYKGLLGIWNGSLKAELRCKEKILANKTRTFTAAPLDTLLGGKVCVDDFNNQFYSKNIECCWTVGMTKFYGGWDKLLRRLPENWVYCDADGSQFDSSLTPYLINAVLTIRSTYMEDWDVGLQMLRNLYTEIVYTPISTPDGTIVKKFRGNNSGQPSTVVDNSLMVVLAMHYALIKECVEFEEIDSTCVFFVNGDDLLIAVNPEKESILDRMSQHFSDLGLNYDFSSRTRRKEELWFMSHRGLLIEGMYVPKLEEERIVSILQWDRADLPEHRLEAICAAMIESWGYSELTHQIRRFYSWLLQQQPFATIAQEGKAPYIASMALRKLYMDRAVDEEELRAFTEMMVALDDEFELDSYEVHHQANDTIDAGGSNKKDAKPEQGSIQPNPNKGKDKDVNAGTSGTHTVPRIKAITSKMRMPTSKGATVPNLEHLLEYAPQQIDISNTRATQSQFDTWYEAVRMAYDIGETEMPTVMNGLMVWCIENGTSPNVNGVWVMMDGNEQVEYPLKPIVENAKPTLRQIMAHFSDVAEAYIEMRNKKEPYMPRYGLIRNLRDMGLARYAFDFYEVTSRTPVRAREAHIQMKAAALKSAQPRLFGLDGGISTQEENTERHTTEDVSPSMHTLLGVKNM</sequence>
<feature type="chain" id="PRO_0000420017" description="Genome polyprotein">
    <location>
        <begin position="1"/>
        <end position="3063"/>
    </location>
</feature>
<feature type="chain" id="PRO_0000040407" description="P1 protease" evidence="8">
    <location>
        <begin position="1"/>
        <end position="284"/>
    </location>
</feature>
<feature type="chain" id="PRO_0000040408" description="Helper component proteinase" evidence="8">
    <location>
        <begin position="285"/>
        <end position="740"/>
    </location>
</feature>
<feature type="chain" id="PRO_0000040409" description="Protein P3" evidence="1">
    <location>
        <begin position="741"/>
        <end position="1105"/>
    </location>
</feature>
<feature type="chain" id="PRO_0000040410" description="6 kDa protein 1" evidence="1">
    <location>
        <begin position="1106"/>
        <end position="1157"/>
    </location>
</feature>
<feature type="chain" id="PRO_0000040411" description="Cytoplasmic inclusion protein" evidence="1">
    <location>
        <begin position="1158"/>
        <end position="1791"/>
    </location>
</feature>
<feature type="chain" id="PRO_0000040412" description="6 kDa protein 2" evidence="1">
    <location>
        <begin position="1792"/>
        <end position="1843"/>
    </location>
</feature>
<feature type="chain" id="PRO_0000040413" description="Viral genome-linked protein" evidence="1">
    <location>
        <begin position="1844"/>
        <end position="2031"/>
    </location>
</feature>
<feature type="chain" id="PRO_0000040414" description="Nuclear inclusion protein A" evidence="1">
    <location>
        <begin position="2032"/>
        <end position="2275"/>
    </location>
</feature>
<feature type="chain" id="PRO_0000040415" description="Nuclear inclusion protein B" evidence="1">
    <location>
        <begin position="2276"/>
        <end position="2796"/>
    </location>
</feature>
<feature type="chain" id="PRO_0000040416" description="Capsid protein" evidence="1">
    <location>
        <begin position="2797"/>
        <end position="3063"/>
    </location>
</feature>
<feature type="domain" description="Peptidase S30" evidence="14">
    <location>
        <begin position="141"/>
        <end position="284"/>
    </location>
</feature>
<feature type="domain" description="Peptidase C6" evidence="13">
    <location>
        <begin position="618"/>
        <end position="740"/>
    </location>
</feature>
<feature type="domain" description="Helicase ATP-binding" evidence="10">
    <location>
        <begin position="1229"/>
        <end position="1381"/>
    </location>
</feature>
<feature type="domain" description="Helicase C-terminal" evidence="11">
    <location>
        <begin position="1400"/>
        <end position="1559"/>
    </location>
</feature>
<feature type="domain" description="Peptidase C4" evidence="12">
    <location>
        <begin position="2032"/>
        <end position="2250"/>
    </location>
</feature>
<feature type="domain" description="RdRp catalytic" evidence="9">
    <location>
        <begin position="2519"/>
        <end position="2643"/>
    </location>
</feature>
<feature type="region of interest" description="Interaction with host EIF4E" evidence="21">
    <location>
        <begin position="1949"/>
        <end position="1964"/>
    </location>
</feature>
<feature type="region of interest" description="Disordered" evidence="15">
    <location>
        <begin position="2798"/>
        <end position="2841"/>
    </location>
</feature>
<feature type="short sequence motif" description="Involved in interaction with stylet and aphid transmission" evidence="1">
    <location>
        <begin position="334"/>
        <end position="337"/>
    </location>
</feature>
<feature type="short sequence motif" description="Involved in virions binding and aphid transmission" evidence="1">
    <location>
        <begin position="592"/>
        <end position="594"/>
    </location>
</feature>
<feature type="short sequence motif" description="DECH box">
    <location>
        <begin position="1331"/>
        <end position="1334"/>
    </location>
</feature>
<feature type="short sequence motif" description="Nuclear localization signal" evidence="8">
    <location>
        <begin position="1884"/>
        <end position="1892"/>
    </location>
</feature>
<feature type="active site" description="For P1 proteinase activity" evidence="14">
    <location>
        <position position="192"/>
    </location>
</feature>
<feature type="active site" description="For P1 proteinase activity" evidence="14">
    <location>
        <position position="201"/>
    </location>
</feature>
<feature type="active site" description="For P1 proteinase activity" evidence="14">
    <location>
        <position position="235"/>
    </location>
</feature>
<feature type="active site" description="For helper component proteinase activity" evidence="13">
    <location>
        <position position="626"/>
    </location>
</feature>
<feature type="active site" description="For helper component proteinase activity" evidence="13">
    <location>
        <position position="699"/>
    </location>
</feature>
<feature type="active site" description="For nuclear inclusion protein A activity" evidence="12">
    <location>
        <position position="2077"/>
    </location>
</feature>
<feature type="active site" description="For nuclear inclusion protein A activity" evidence="12">
    <location>
        <position position="2112"/>
    </location>
</feature>
<feature type="active site" description="For nuclear inclusion protein A activity" evidence="12">
    <location>
        <position position="2182"/>
    </location>
</feature>
<feature type="binding site" evidence="10">
    <location>
        <begin position="1242"/>
        <end position="1249"/>
    </location>
    <ligand>
        <name>ATP</name>
        <dbReference type="ChEBI" id="CHEBI:30616"/>
    </ligand>
</feature>
<feature type="site" description="Cleavage; by P1 proteinase" evidence="14">
    <location>
        <begin position="284"/>
        <end position="285"/>
    </location>
</feature>
<feature type="site" description="Cleavage; by autolysis" evidence="13">
    <location>
        <begin position="740"/>
        <end position="741"/>
    </location>
</feature>
<feature type="site" description="Cleavage; by NIa-pro" evidence="22">
    <location>
        <begin position="1105"/>
        <end position="1106"/>
    </location>
</feature>
<feature type="site" description="Cleavage; by NIa-pro" evidence="22">
    <location>
        <begin position="1157"/>
        <end position="1158"/>
    </location>
</feature>
<feature type="site" description="Cleavage; by NIa-pro" evidence="22">
    <location>
        <begin position="1791"/>
        <end position="1792"/>
    </location>
</feature>
<feature type="site" description="Cleavage; by NIa-pro" evidence="22">
    <location>
        <begin position="1843"/>
        <end position="1844"/>
    </location>
</feature>
<feature type="site" description="RNA-binding" evidence="19">
    <location>
        <position position="1907"/>
    </location>
</feature>
<feature type="site" description="Interaction with host EIF4E" evidence="19">
    <location>
        <position position="1949"/>
    </location>
</feature>
<feature type="site" description="Cleavage; by NIa-pro" evidence="22">
    <location>
        <begin position="2031"/>
        <end position="2032"/>
    </location>
</feature>
<feature type="site" description="Cleavage; by NIa-pro" evidence="22">
    <location>
        <begin position="2275"/>
        <end position="2276"/>
    </location>
</feature>
<feature type="site" description="Cleavage; by NIa-pro" evidence="22">
    <location>
        <begin position="2796"/>
        <end position="2797"/>
    </location>
</feature>
<feature type="modified residue" description="O-(5'-phospho-RNA)-tyrosine" evidence="3">
    <location>
        <position position="1907"/>
    </location>
</feature>
<feature type="modified residue" description="Phosphothreonine" evidence="5">
    <location>
        <position position="3046"/>
    </location>
</feature>
<feature type="sequence variant" description="In strain: SON41." evidence="16">
    <original>S</original>
    <variation>G</variation>
    <location>
        <position position="1944"/>
    </location>
</feature>
<feature type="sequence variant" description="In strain: SON41." evidence="16">
    <original>K</original>
    <variation>R</variation>
    <location>
        <position position="1948"/>
    </location>
</feature>
<feature type="sequence variant" description="In strain: SON41." evidence="16">
    <original>M</original>
    <variation>P</variation>
    <location>
        <position position="1958"/>
    </location>
</feature>
<feature type="sequence variant" description="In strain: SON41g." evidence="18">
    <original>M</original>
    <variation>S</variation>
    <location>
        <position position="1958"/>
    </location>
</feature>
<feature type="sequence variant" description="In strain: LYE84." evidence="16">
    <original>G</original>
    <variation>R</variation>
    <location>
        <position position="1962"/>
    </location>
</feature>
<feature type="sequence variant" description="In strain: SON41." evidence="16">
    <original>G</original>
    <variation>Y</variation>
    <location>
        <position position="1962"/>
    </location>
</feature>
<feature type="sequence variant" description="In strain: LYE84." evidence="16">
    <original>T</original>
    <variation>N</variation>
    <location>
        <position position="1966"/>
    </location>
</feature>
<feature type="sequence variant" description="In strain: SON41." evidence="16">
    <original>T</original>
    <variation>S</variation>
    <location>
        <position position="1966"/>
    </location>
</feature>
<feature type="sequence variant" description="In strain: SON41g." evidence="18">
    <original>I</original>
    <variation>V</variation>
    <location>
        <position position="1982"/>
    </location>
</feature>
<feature type="mutagenesis site" description="Reduced binging to host EIF4E; when associated with K-114 and K-116." evidence="19">
    <original>D</original>
    <variation>K</variation>
    <location>
        <position position="1954"/>
    </location>
</feature>
<feature type="mutagenesis site" description="Reduced binging to host EIF4E; when associated with K-111 and K-116." evidence="19">
    <original>E</original>
    <variation>K</variation>
    <location>
        <position position="1957"/>
    </location>
</feature>
<feature type="mutagenesis site" description="Reduced binging to host EIF4E; when associated with K-116." evidence="19">
    <original>M</original>
    <variation>A</variation>
    <location>
        <position position="1958"/>
    </location>
</feature>
<feature type="mutagenesis site" description="Reduced binging to host EIF4E; when associated with A-115. Reduced binging to host EIF4E; when associated with K-111 and K-114." evidence="19">
    <original>Q</original>
    <variation>K</variation>
    <location>
        <position position="1959"/>
    </location>
</feature>
<feature type="strand" evidence="24">
    <location>
        <begin position="1916"/>
        <end position="1920"/>
    </location>
</feature>
<feature type="strand" evidence="24">
    <location>
        <begin position="1922"/>
        <end position="1924"/>
    </location>
</feature>
<feature type="strand" evidence="24">
    <location>
        <begin position="1928"/>
        <end position="1930"/>
    </location>
</feature>
<feature type="helix" evidence="24">
    <location>
        <begin position="1936"/>
        <end position="1953"/>
    </location>
</feature>
<feature type="turn" evidence="24">
    <location>
        <begin position="1959"/>
        <end position="1962"/>
    </location>
</feature>
<feature type="strand" evidence="24">
    <location>
        <begin position="1967"/>
        <end position="1972"/>
    </location>
</feature>
<feature type="strand" evidence="24">
    <location>
        <begin position="1978"/>
        <end position="1984"/>
    </location>
</feature>
<feature type="strand" evidence="24">
    <location>
        <begin position="1995"/>
        <end position="1997"/>
    </location>
</feature>
<feature type="strand" evidence="24">
    <location>
        <begin position="2016"/>
        <end position="2019"/>
    </location>
</feature>
<feature type="turn" evidence="24">
    <location>
        <begin position="2020"/>
        <end position="2022"/>
    </location>
</feature>
<evidence type="ECO:0000250" key="1"/>
<evidence type="ECO:0000250" key="2">
    <source>
        <dbReference type="UniProtKB" id="P04517"/>
    </source>
</evidence>
<evidence type="ECO:0000250" key="3">
    <source>
        <dbReference type="UniProtKB" id="P09814"/>
    </source>
</evidence>
<evidence type="ECO:0000250" key="4">
    <source>
        <dbReference type="UniProtKB" id="P13529"/>
    </source>
</evidence>
<evidence type="ECO:0000250" key="5">
    <source>
        <dbReference type="UniProtKB" id="P17767"/>
    </source>
</evidence>
<evidence type="ECO:0000250" key="6">
    <source>
        <dbReference type="UniProtKB" id="P21231"/>
    </source>
</evidence>
<evidence type="ECO:0000250" key="7">
    <source>
        <dbReference type="UniProtKB" id="P89509"/>
    </source>
</evidence>
<evidence type="ECO:0000255" key="8"/>
<evidence type="ECO:0000255" key="9">
    <source>
        <dbReference type="PROSITE-ProRule" id="PRU00539"/>
    </source>
</evidence>
<evidence type="ECO:0000255" key="10">
    <source>
        <dbReference type="PROSITE-ProRule" id="PRU00541"/>
    </source>
</evidence>
<evidence type="ECO:0000255" key="11">
    <source>
        <dbReference type="PROSITE-ProRule" id="PRU00542"/>
    </source>
</evidence>
<evidence type="ECO:0000255" key="12">
    <source>
        <dbReference type="PROSITE-ProRule" id="PRU00766"/>
    </source>
</evidence>
<evidence type="ECO:0000255" key="13">
    <source>
        <dbReference type="PROSITE-ProRule" id="PRU01080"/>
    </source>
</evidence>
<evidence type="ECO:0000255" key="14">
    <source>
        <dbReference type="PROSITE-ProRule" id="PRU01219"/>
    </source>
</evidence>
<evidence type="ECO:0000256" key="15">
    <source>
        <dbReference type="SAM" id="MobiDB-lite"/>
    </source>
</evidence>
<evidence type="ECO:0000269" key="16">
    <source>
    </source>
</evidence>
<evidence type="ECO:0000269" key="17">
    <source>
    </source>
</evidence>
<evidence type="ECO:0000269" key="18">
    <source>
    </source>
</evidence>
<evidence type="ECO:0000269" key="19">
    <source>
    </source>
</evidence>
<evidence type="ECO:0000305" key="20"/>
<evidence type="ECO:0000305" key="21">
    <source>
    </source>
</evidence>
<evidence type="ECO:0000305" key="22">
    <source>
    </source>
</evidence>
<evidence type="ECO:0007744" key="23">
    <source>
        <dbReference type="PDB" id="6NFW"/>
    </source>
</evidence>
<evidence type="ECO:0007829" key="24">
    <source>
        <dbReference type="PDB" id="6NFW"/>
    </source>
</evidence>
<organismHost>
    <name type="scientific">Capsicum</name>
    <name type="common">peppers</name>
    <dbReference type="NCBI Taxonomy" id="4071"/>
</organismHost>
<organismHost>
    <name type="scientific">Nicotiana</name>
    <dbReference type="NCBI Taxonomy" id="4085"/>
</organismHost>
<organismHost>
    <name type="scientific">Solanum lycopersicum</name>
    <name type="common">Tomato</name>
    <name type="synonym">Lycopersicon esculentum</name>
    <dbReference type="NCBI Taxonomy" id="4081"/>
</organismHost>
<organismHost>
    <name type="scientific">Solanum tuberosum</name>
    <name type="common">Potato</name>
    <dbReference type="NCBI Taxonomy" id="4113"/>
</organismHost>
<protein>
    <recommendedName>
        <fullName>Genome polyprotein</fullName>
    </recommendedName>
    <component>
        <recommendedName>
            <fullName>P1 protease</fullName>
            <ecNumber>3.4.21.-</ecNumber>
        </recommendedName>
        <alternativeName>
            <fullName>Leader protease P1</fullName>
        </alternativeName>
        <alternativeName>
            <fullName>N-terminal protein</fullName>
        </alternativeName>
        <alternativeName>
            <fullName>P1 proteinase</fullName>
        </alternativeName>
    </component>
    <component>
        <recommendedName>
            <fullName>Helper component proteinase</fullName>
            <shortName>HC-pro</shortName>
            <ecNumber evidence="2">3.4.22.45</ecNumber>
        </recommendedName>
    </component>
    <component>
        <recommendedName>
            <fullName>Protein P3</fullName>
        </recommendedName>
    </component>
    <component>
        <recommendedName>
            <fullName>6 kDa protein 1</fullName>
            <shortName>6K1</shortName>
        </recommendedName>
    </component>
    <component>
        <recommendedName>
            <fullName>Cytoplasmic inclusion protein</fullName>
            <shortName>CI</shortName>
            <ecNumber>3.6.4.-</ecNumber>
        </recommendedName>
    </component>
    <component>
        <recommendedName>
            <fullName>6 kDa protein 2</fullName>
            <shortName>6K2</shortName>
        </recommendedName>
    </component>
    <component>
        <recommendedName>
            <fullName>Viral genome-linked protein</fullName>
        </recommendedName>
        <alternativeName>
            <fullName>VPg</fullName>
        </alternativeName>
    </component>
    <component>
        <recommendedName>
            <fullName>Nuclear inclusion protein A</fullName>
            <shortName>NI-a</shortName>
            <shortName>NIa</shortName>
            <ecNumber>3.4.22.44</ecNumber>
        </recommendedName>
        <alternativeName>
            <fullName>49 kDa proteinase</fullName>
            <shortName>49 kDa-Pro</shortName>
        </alternativeName>
        <alternativeName>
            <fullName>NIa-pro</fullName>
        </alternativeName>
    </component>
    <component>
        <recommendedName>
            <fullName>Nuclear inclusion protein B</fullName>
            <shortName>NI-b</shortName>
            <shortName>NIb</shortName>
            <ecNumber>2.7.7.48</ecNumber>
        </recommendedName>
        <alternativeName>
            <fullName>RNA-directed RNA polymerase</fullName>
        </alternativeName>
    </component>
    <component>
        <recommendedName>
            <fullName>Capsid protein</fullName>
            <shortName>CP</shortName>
        </recommendedName>
        <alternativeName>
            <fullName>Coat protein</fullName>
        </alternativeName>
    </component>
</protein>
<proteinExistence type="evidence at protein level"/>
<dbReference type="EC" id="3.4.21.-"/>
<dbReference type="EC" id="3.4.22.45" evidence="2"/>
<dbReference type="EC" id="3.6.4.-"/>
<dbReference type="EC" id="3.4.22.44"/>
<dbReference type="EC" id="2.7.7.48"/>
<dbReference type="EMBL" id="X12456">
    <property type="protein sequence ID" value="CAA30988.1"/>
    <property type="molecule type" value="Genomic_RNA"/>
</dbReference>
<dbReference type="EMBL" id="D00441">
    <property type="protein sequence ID" value="BAA00342.1"/>
    <property type="molecule type" value="Genomic_RNA"/>
</dbReference>
<dbReference type="PIR" id="JS0166">
    <property type="entry name" value="JS0166"/>
</dbReference>
<dbReference type="RefSeq" id="NP_056759.1">
    <property type="nucleotide sequence ID" value="NC_001616.1"/>
</dbReference>
<dbReference type="PDB" id="6NFW">
    <property type="method" value="NMR"/>
    <property type="chains" value="A=47-230"/>
</dbReference>
<dbReference type="PDBsum" id="6NFW"/>
<dbReference type="SMR" id="P18247"/>
<dbReference type="MEROPS" id="C04.002"/>
<dbReference type="MEROPS" id="C06.001"/>
<dbReference type="GeneID" id="1494052"/>
<dbReference type="KEGG" id="vg:1494052"/>
<dbReference type="BRENDA" id="3.4.22.45">
    <property type="organism ID" value="5005"/>
</dbReference>
<dbReference type="Proteomes" id="UP000000520">
    <property type="component" value="Segment"/>
</dbReference>
<dbReference type="GO" id="GO:0019029">
    <property type="term" value="C:helical viral capsid"/>
    <property type="evidence" value="ECO:0007669"/>
    <property type="project" value="UniProtKB-KW"/>
</dbReference>
<dbReference type="GO" id="GO:0044161">
    <property type="term" value="C:host cell cytoplasmic vesicle"/>
    <property type="evidence" value="ECO:0007669"/>
    <property type="project" value="UniProtKB-SubCell"/>
</dbReference>
<dbReference type="GO" id="GO:0042025">
    <property type="term" value="C:host cell nucleus"/>
    <property type="evidence" value="ECO:0007669"/>
    <property type="project" value="UniProtKB-SubCell"/>
</dbReference>
<dbReference type="GO" id="GO:0005524">
    <property type="term" value="F:ATP binding"/>
    <property type="evidence" value="ECO:0007669"/>
    <property type="project" value="UniProtKB-KW"/>
</dbReference>
<dbReference type="GO" id="GO:0004197">
    <property type="term" value="F:cysteine-type endopeptidase activity"/>
    <property type="evidence" value="ECO:0007669"/>
    <property type="project" value="InterPro"/>
</dbReference>
<dbReference type="GO" id="GO:0004386">
    <property type="term" value="F:helicase activity"/>
    <property type="evidence" value="ECO:0007669"/>
    <property type="project" value="UniProtKB-KW"/>
</dbReference>
<dbReference type="GO" id="GO:0016818">
    <property type="term" value="F:hydrolase activity, acting on acid anhydrides, in phosphorus-containing anhydrides"/>
    <property type="evidence" value="ECO:0007669"/>
    <property type="project" value="InterPro"/>
</dbReference>
<dbReference type="GO" id="GO:0003723">
    <property type="term" value="F:RNA binding"/>
    <property type="evidence" value="ECO:0007669"/>
    <property type="project" value="InterPro"/>
</dbReference>
<dbReference type="GO" id="GO:0003968">
    <property type="term" value="F:RNA-directed RNA polymerase activity"/>
    <property type="evidence" value="ECO:0007669"/>
    <property type="project" value="UniProtKB-KW"/>
</dbReference>
<dbReference type="GO" id="GO:0008236">
    <property type="term" value="F:serine-type peptidase activity"/>
    <property type="evidence" value="ECO:0007669"/>
    <property type="project" value="UniProtKB-KW"/>
</dbReference>
<dbReference type="GO" id="GO:0005198">
    <property type="term" value="F:structural molecule activity"/>
    <property type="evidence" value="ECO:0007669"/>
    <property type="project" value="InterPro"/>
</dbReference>
<dbReference type="GO" id="GO:0006351">
    <property type="term" value="P:DNA-templated transcription"/>
    <property type="evidence" value="ECO:0007669"/>
    <property type="project" value="InterPro"/>
</dbReference>
<dbReference type="GO" id="GO:0006508">
    <property type="term" value="P:proteolysis"/>
    <property type="evidence" value="ECO:0007669"/>
    <property type="project" value="UniProtKB-KW"/>
</dbReference>
<dbReference type="GO" id="GO:0052170">
    <property type="term" value="P:symbiont-mediated suppression of host innate immune response"/>
    <property type="evidence" value="ECO:0007669"/>
    <property type="project" value="UniProtKB-KW"/>
</dbReference>
<dbReference type="GO" id="GO:0039694">
    <property type="term" value="P:viral RNA genome replication"/>
    <property type="evidence" value="ECO:0007669"/>
    <property type="project" value="InterPro"/>
</dbReference>
<dbReference type="GO" id="GO:0075523">
    <property type="term" value="P:viral translational frameshifting"/>
    <property type="evidence" value="ECO:0007669"/>
    <property type="project" value="UniProtKB-KW"/>
</dbReference>
<dbReference type="CDD" id="cd23175">
    <property type="entry name" value="ps-ssRNAv_Potyviridae_RdRp"/>
    <property type="match status" value="1"/>
</dbReference>
<dbReference type="Gene3D" id="3.30.70.270">
    <property type="match status" value="1"/>
</dbReference>
<dbReference type="Gene3D" id="3.90.70.150">
    <property type="entry name" value="Helper component proteinase"/>
    <property type="match status" value="1"/>
</dbReference>
<dbReference type="Gene3D" id="3.40.50.300">
    <property type="entry name" value="P-loop containing nucleotide triphosphate hydrolases"/>
    <property type="match status" value="2"/>
</dbReference>
<dbReference type="Gene3D" id="2.40.10.10">
    <property type="entry name" value="Trypsin-like serine proteases"/>
    <property type="match status" value="2"/>
</dbReference>
<dbReference type="InterPro" id="IPR011545">
    <property type="entry name" value="DEAD/DEAH_box_helicase_dom"/>
</dbReference>
<dbReference type="InterPro" id="IPR043502">
    <property type="entry name" value="DNA/RNA_pol_sf"/>
</dbReference>
<dbReference type="InterPro" id="IPR001456">
    <property type="entry name" value="HC-pro"/>
</dbReference>
<dbReference type="InterPro" id="IPR031159">
    <property type="entry name" value="HC_PRO_CPD_dom"/>
</dbReference>
<dbReference type="InterPro" id="IPR042308">
    <property type="entry name" value="HC_PRO_CPD_sf"/>
</dbReference>
<dbReference type="InterPro" id="IPR014001">
    <property type="entry name" value="Helicase_ATP-bd"/>
</dbReference>
<dbReference type="InterPro" id="IPR001650">
    <property type="entry name" value="Helicase_C-like"/>
</dbReference>
<dbReference type="InterPro" id="IPR027417">
    <property type="entry name" value="P-loop_NTPase"/>
</dbReference>
<dbReference type="InterPro" id="IPR002540">
    <property type="entry name" value="Pept_S30_P1_potyvir"/>
</dbReference>
<dbReference type="InterPro" id="IPR009003">
    <property type="entry name" value="Peptidase_S1_PA"/>
</dbReference>
<dbReference type="InterPro" id="IPR043504">
    <property type="entry name" value="Peptidase_S1_PA_chymotrypsin"/>
</dbReference>
<dbReference type="InterPro" id="IPR001592">
    <property type="entry name" value="Poty_coat"/>
</dbReference>
<dbReference type="InterPro" id="IPR001730">
    <property type="entry name" value="Potyv_NIa-pro_dom"/>
</dbReference>
<dbReference type="InterPro" id="IPR039560">
    <property type="entry name" value="Potyvirid-P3"/>
</dbReference>
<dbReference type="InterPro" id="IPR013648">
    <property type="entry name" value="PP_Potyviridae"/>
</dbReference>
<dbReference type="InterPro" id="IPR043128">
    <property type="entry name" value="Rev_trsase/Diguanyl_cyclase"/>
</dbReference>
<dbReference type="InterPro" id="IPR001205">
    <property type="entry name" value="RNA-dir_pol_C"/>
</dbReference>
<dbReference type="InterPro" id="IPR007094">
    <property type="entry name" value="RNA-dir_pol_PSvirus"/>
</dbReference>
<dbReference type="PANTHER" id="PTHR43519">
    <property type="entry name" value="ATP-DEPENDENT RNA HELICASE HRPB"/>
    <property type="match status" value="1"/>
</dbReference>
<dbReference type="PANTHER" id="PTHR43519:SF1">
    <property type="entry name" value="ATP-DEPENDENT RNA HELICASE HRPB"/>
    <property type="match status" value="1"/>
</dbReference>
<dbReference type="Pfam" id="PF00270">
    <property type="entry name" value="DEAD"/>
    <property type="match status" value="1"/>
</dbReference>
<dbReference type="Pfam" id="PF00271">
    <property type="entry name" value="Helicase_C"/>
    <property type="match status" value="1"/>
</dbReference>
<dbReference type="Pfam" id="PF00863">
    <property type="entry name" value="Peptidase_C4"/>
    <property type="match status" value="1"/>
</dbReference>
<dbReference type="Pfam" id="PF00851">
    <property type="entry name" value="Peptidase_C6"/>
    <property type="match status" value="1"/>
</dbReference>
<dbReference type="Pfam" id="PF01577">
    <property type="entry name" value="Peptidase_S30"/>
    <property type="match status" value="1"/>
</dbReference>
<dbReference type="Pfam" id="PF00767">
    <property type="entry name" value="Poty_coat"/>
    <property type="match status" value="1"/>
</dbReference>
<dbReference type="Pfam" id="PF08440">
    <property type="entry name" value="Poty_PP"/>
    <property type="match status" value="1"/>
</dbReference>
<dbReference type="Pfam" id="PF13608">
    <property type="entry name" value="Potyvirid-P3"/>
    <property type="match status" value="1"/>
</dbReference>
<dbReference type="Pfam" id="PF00680">
    <property type="entry name" value="RdRP_1"/>
    <property type="match status" value="1"/>
</dbReference>
<dbReference type="PRINTS" id="PR00966">
    <property type="entry name" value="NIAPOTYPTASE"/>
</dbReference>
<dbReference type="SMART" id="SM00487">
    <property type="entry name" value="DEXDc"/>
    <property type="match status" value="1"/>
</dbReference>
<dbReference type="SMART" id="SM00490">
    <property type="entry name" value="HELICc"/>
    <property type="match status" value="1"/>
</dbReference>
<dbReference type="SUPFAM" id="SSF56672">
    <property type="entry name" value="DNA/RNA polymerases"/>
    <property type="match status" value="1"/>
</dbReference>
<dbReference type="SUPFAM" id="SSF52540">
    <property type="entry name" value="P-loop containing nucleoside triphosphate hydrolases"/>
    <property type="match status" value="2"/>
</dbReference>
<dbReference type="SUPFAM" id="SSF50494">
    <property type="entry name" value="Trypsin-like serine proteases"/>
    <property type="match status" value="1"/>
</dbReference>
<dbReference type="PROSITE" id="PS51744">
    <property type="entry name" value="HC_PRO_CPD"/>
    <property type="match status" value="1"/>
</dbReference>
<dbReference type="PROSITE" id="PS51192">
    <property type="entry name" value="HELICASE_ATP_BIND_1"/>
    <property type="match status" value="1"/>
</dbReference>
<dbReference type="PROSITE" id="PS51194">
    <property type="entry name" value="HELICASE_CTER"/>
    <property type="match status" value="1"/>
</dbReference>
<dbReference type="PROSITE" id="PS51436">
    <property type="entry name" value="POTYVIRUS_NIA_PRO"/>
    <property type="match status" value="1"/>
</dbReference>
<dbReference type="PROSITE" id="PS51871">
    <property type="entry name" value="PV_P1_PRO"/>
    <property type="match status" value="1"/>
</dbReference>
<dbReference type="PROSITE" id="PS50507">
    <property type="entry name" value="RDRP_SSRNA_POS"/>
    <property type="match status" value="1"/>
</dbReference>